<evidence type="ECO:0000255" key="1">
    <source>
        <dbReference type="HAMAP-Rule" id="MF_01818"/>
    </source>
</evidence>
<feature type="chain" id="PRO_1000216005" description="Ribonuclease BN">
    <location>
        <begin position="1"/>
        <end position="305"/>
    </location>
</feature>
<feature type="active site" description="Proton acceptor" evidence="1">
    <location>
        <position position="68"/>
    </location>
</feature>
<feature type="binding site" evidence="1">
    <location>
        <position position="64"/>
    </location>
    <ligand>
        <name>Zn(2+)</name>
        <dbReference type="ChEBI" id="CHEBI:29105"/>
        <label>1</label>
        <note>catalytic</note>
    </ligand>
</feature>
<feature type="binding site" evidence="1">
    <location>
        <position position="66"/>
    </location>
    <ligand>
        <name>Zn(2+)</name>
        <dbReference type="ChEBI" id="CHEBI:29105"/>
        <label>1</label>
        <note>catalytic</note>
    </ligand>
</feature>
<feature type="binding site" evidence="1">
    <location>
        <position position="68"/>
    </location>
    <ligand>
        <name>Zn(2+)</name>
        <dbReference type="ChEBI" id="CHEBI:29105"/>
        <label>2</label>
        <note>catalytic</note>
    </ligand>
</feature>
<feature type="binding site" evidence="1">
    <location>
        <position position="69"/>
    </location>
    <ligand>
        <name>Zn(2+)</name>
        <dbReference type="ChEBI" id="CHEBI:29105"/>
        <label>2</label>
        <note>catalytic</note>
    </ligand>
</feature>
<feature type="binding site" evidence="1">
    <location>
        <position position="141"/>
    </location>
    <ligand>
        <name>Zn(2+)</name>
        <dbReference type="ChEBI" id="CHEBI:29105"/>
        <label>1</label>
        <note>catalytic</note>
    </ligand>
</feature>
<feature type="binding site" evidence="1">
    <location>
        <position position="212"/>
    </location>
    <ligand>
        <name>Zn(2+)</name>
        <dbReference type="ChEBI" id="CHEBI:29105"/>
        <label>1</label>
        <note>catalytic</note>
    </ligand>
</feature>
<feature type="binding site" evidence="1">
    <location>
        <position position="212"/>
    </location>
    <ligand>
        <name>Zn(2+)</name>
        <dbReference type="ChEBI" id="CHEBI:29105"/>
        <label>2</label>
        <note>catalytic</note>
    </ligand>
</feature>
<feature type="binding site" evidence="1">
    <location>
        <position position="270"/>
    </location>
    <ligand>
        <name>Zn(2+)</name>
        <dbReference type="ChEBI" id="CHEBI:29105"/>
        <label>2</label>
        <note>catalytic</note>
    </ligand>
</feature>
<dbReference type="EC" id="3.1.-.-" evidence="1"/>
<dbReference type="EMBL" id="CP001396">
    <property type="protein sequence ID" value="ACR62085.1"/>
    <property type="molecule type" value="Genomic_DNA"/>
</dbReference>
<dbReference type="RefSeq" id="WP_001300687.1">
    <property type="nucleotide sequence ID" value="NC_012759.1"/>
</dbReference>
<dbReference type="SMR" id="C4ZUB1"/>
<dbReference type="KEGG" id="ebw:BWG_2042"/>
<dbReference type="HOGENOM" id="CLU_031317_2_0_6"/>
<dbReference type="GO" id="GO:0042781">
    <property type="term" value="F:3'-tRNA processing endoribonuclease activity"/>
    <property type="evidence" value="ECO:0007669"/>
    <property type="project" value="TreeGrafter"/>
</dbReference>
<dbReference type="GO" id="GO:0004527">
    <property type="term" value="F:exonuclease activity"/>
    <property type="evidence" value="ECO:0007669"/>
    <property type="project" value="UniProtKB-UniRule"/>
</dbReference>
<dbReference type="GO" id="GO:0008270">
    <property type="term" value="F:zinc ion binding"/>
    <property type="evidence" value="ECO:0007669"/>
    <property type="project" value="UniProtKB-UniRule"/>
</dbReference>
<dbReference type="CDD" id="cd07717">
    <property type="entry name" value="RNaseZ_ZiPD-like_MBL-fold"/>
    <property type="match status" value="1"/>
</dbReference>
<dbReference type="FunFam" id="3.60.15.10:FF:000002">
    <property type="entry name" value="Ribonuclease Z"/>
    <property type="match status" value="1"/>
</dbReference>
<dbReference type="Gene3D" id="3.60.15.10">
    <property type="entry name" value="Ribonuclease Z/Hydroxyacylglutathione hydrolase-like"/>
    <property type="match status" value="1"/>
</dbReference>
<dbReference type="HAMAP" id="MF_01818">
    <property type="entry name" value="RNase_Z_BN"/>
    <property type="match status" value="1"/>
</dbReference>
<dbReference type="InterPro" id="IPR001279">
    <property type="entry name" value="Metallo-B-lactamas"/>
</dbReference>
<dbReference type="InterPro" id="IPR036866">
    <property type="entry name" value="RibonucZ/Hydroxyglut_hydro"/>
</dbReference>
<dbReference type="InterPro" id="IPR013469">
    <property type="entry name" value="Rnase_BN"/>
</dbReference>
<dbReference type="InterPro" id="IPR013471">
    <property type="entry name" value="RNase_Z/BN"/>
</dbReference>
<dbReference type="NCBIfam" id="NF000800">
    <property type="entry name" value="PRK00055.1-1"/>
    <property type="match status" value="1"/>
</dbReference>
<dbReference type="NCBIfam" id="NF000801">
    <property type="entry name" value="PRK00055.1-3"/>
    <property type="match status" value="1"/>
</dbReference>
<dbReference type="NCBIfam" id="TIGR02651">
    <property type="entry name" value="RNase_Z"/>
    <property type="match status" value="1"/>
</dbReference>
<dbReference type="NCBIfam" id="TIGR02649">
    <property type="entry name" value="true_RNase_BN"/>
    <property type="match status" value="1"/>
</dbReference>
<dbReference type="PANTHER" id="PTHR46018">
    <property type="entry name" value="ZINC PHOSPHODIESTERASE ELAC PROTEIN 1"/>
    <property type="match status" value="1"/>
</dbReference>
<dbReference type="PANTHER" id="PTHR46018:SF2">
    <property type="entry name" value="ZINC PHOSPHODIESTERASE ELAC PROTEIN 1"/>
    <property type="match status" value="1"/>
</dbReference>
<dbReference type="Pfam" id="PF12706">
    <property type="entry name" value="Lactamase_B_2"/>
    <property type="match status" value="1"/>
</dbReference>
<dbReference type="SMART" id="SM00849">
    <property type="entry name" value="Lactamase_B"/>
    <property type="match status" value="1"/>
</dbReference>
<dbReference type="SUPFAM" id="SSF56281">
    <property type="entry name" value="Metallo-hydrolase/oxidoreductase"/>
    <property type="match status" value="1"/>
</dbReference>
<keyword id="KW-0255">Endonuclease</keyword>
<keyword id="KW-0269">Exonuclease</keyword>
<keyword id="KW-0378">Hydrolase</keyword>
<keyword id="KW-0479">Metal-binding</keyword>
<keyword id="KW-0540">Nuclease</keyword>
<keyword id="KW-0819">tRNA processing</keyword>
<keyword id="KW-0862">Zinc</keyword>
<sequence length="305" mass="32930">MELIFLGTSAGVPTRTRNVTAILLNLQHPTQSGLWLFDCGEGTQHQLLHTAFNPGKLDKIFISHLHGDHLFGLPGLLCSRSMSGIIQPLTIYGPQGIREFVETALRISGSWTDYPLEIVEIGAGEILDDGLRKVTAYPLEHPLECYGYRIEEHDKPGALNAQALKAAGVPPGPLFQELKAGKTITLEDGRQINGADYLAAPVPGKALAIFGDTGPCDAALDLAKGVDVMVHEATLDITMEAKANSRGHSSTRQAATLAREAGVGKLIITHVSSRYDDKGCQHLLRECRSIFPATELANDFTVFNV</sequence>
<gene>
    <name evidence="1" type="primary">rbn</name>
    <name type="synonym">rnz</name>
    <name type="ordered locus">BWG_2042</name>
</gene>
<comment type="function">
    <text evidence="1">Zinc phosphodiesterase, which has both exoribonuclease and endoribonuclease activities.</text>
</comment>
<comment type="cofactor">
    <cofactor evidence="1">
        <name>Zn(2+)</name>
        <dbReference type="ChEBI" id="CHEBI:29105"/>
    </cofactor>
    <text evidence="1">Binds 2 Zn(2+) ions.</text>
</comment>
<comment type="subunit">
    <text evidence="1">Homodimer.</text>
</comment>
<comment type="similarity">
    <text evidence="1">Belongs to the RNase Z family. RNase BN subfamily.</text>
</comment>
<reference key="1">
    <citation type="journal article" date="2009" name="J. Bacteriol.">
        <title>Genomic sequencing reveals regulatory mutations and recombinational events in the widely used MC4100 lineage of Escherichia coli K-12.</title>
        <authorList>
            <person name="Ferenci T."/>
            <person name="Zhou Z."/>
            <person name="Betteridge T."/>
            <person name="Ren Y."/>
            <person name="Liu Y."/>
            <person name="Feng L."/>
            <person name="Reeves P.R."/>
            <person name="Wang L."/>
        </authorList>
    </citation>
    <scope>NUCLEOTIDE SEQUENCE [LARGE SCALE GENOMIC DNA]</scope>
    <source>
        <strain>K12 / MC4100 / BW2952</strain>
    </source>
</reference>
<name>RBN_ECOBW</name>
<accession>C4ZUB1</accession>
<proteinExistence type="inferred from homology"/>
<protein>
    <recommendedName>
        <fullName evidence="1">Ribonuclease BN</fullName>
        <shortName evidence="1">RNase BN</shortName>
        <ecNumber evidence="1">3.1.-.-</ecNumber>
    </recommendedName>
    <alternativeName>
        <fullName evidence="1">Ribonuclease Z homolog</fullName>
        <shortName evidence="1">RNase Z homolog</shortName>
    </alternativeName>
</protein>
<organism>
    <name type="scientific">Escherichia coli (strain K12 / MC4100 / BW2952)</name>
    <dbReference type="NCBI Taxonomy" id="595496"/>
    <lineage>
        <taxon>Bacteria</taxon>
        <taxon>Pseudomonadati</taxon>
        <taxon>Pseudomonadota</taxon>
        <taxon>Gammaproteobacteria</taxon>
        <taxon>Enterobacterales</taxon>
        <taxon>Enterobacteriaceae</taxon>
        <taxon>Escherichia</taxon>
    </lineage>
</organism>